<keyword id="KW-0244">Early protein</keyword>
<keyword id="KW-1262">Eukaryotic host gene expression shutoff by virus</keyword>
<keyword id="KW-1038">Host endoplasmic reticulum</keyword>
<keyword id="KW-1190">Host gene expression shutoff by virus</keyword>
<keyword id="KW-0945">Host-virus interaction</keyword>
<keyword id="KW-0378">Hydrolase</keyword>
<keyword id="KW-0426">Late protein</keyword>
<keyword id="KW-0460">Magnesium</keyword>
<keyword id="KW-0464">Manganese</keyword>
<keyword id="KW-0479">Metal-binding</keyword>
<keyword id="KW-0511">Multifunctional enzyme</keyword>
<keyword id="KW-0694">RNA-binding</keyword>
<protein>
    <recommendedName>
        <fullName evidence="2">mRNA-decapping protein g5R</fullName>
        <shortName>g5Rp</shortName>
        <ecNumber evidence="2">3.1.3.-</ecNumber>
    </recommendedName>
    <alternativeName>
        <fullName evidence="2">ASFV-DP</fullName>
    </alternativeName>
    <alternativeName>
        <fullName>Diphosphoinositol polyphosphate phosphohydrolase</fullName>
        <shortName>DIPP</shortName>
        <ecNumber evidence="2">3.6.1.52</ecNumber>
    </alternativeName>
</protein>
<organism>
    <name type="scientific">African swine fever virus (isolate Warthog/Namibia/Wart80/1980)</name>
    <name type="common">ASFV</name>
    <dbReference type="NCBI Taxonomy" id="561444"/>
    <lineage>
        <taxon>Viruses</taxon>
        <taxon>Varidnaviria</taxon>
        <taxon>Bamfordvirae</taxon>
        <taxon>Nucleocytoviricota</taxon>
        <taxon>Pokkesviricetes</taxon>
        <taxon>Asfuvirales</taxon>
        <taxon>Asfarviridae</taxon>
        <taxon>Asfivirus</taxon>
        <taxon>African swine fever virus</taxon>
    </lineage>
</organism>
<gene>
    <name type="ordered locus">War-112</name>
</gene>
<feature type="chain" id="PRO_0000373097" description="mRNA-decapping protein g5R">
    <location>
        <begin position="1"/>
        <end position="246"/>
    </location>
</feature>
<feature type="domain" description="Nudix hydrolase" evidence="3">
    <location>
        <begin position="93"/>
        <end position="239"/>
    </location>
</feature>
<feature type="short sequence motif" description="Nudix box">
    <location>
        <begin position="128"/>
        <end position="149"/>
    </location>
</feature>
<feature type="active site" description="Nucleophile" evidence="2">
    <location>
        <position position="143"/>
    </location>
</feature>
<feature type="binding site" evidence="1">
    <location>
        <position position="134"/>
    </location>
    <ligand>
        <name>Mg(2+)</name>
        <dbReference type="ChEBI" id="CHEBI:18420"/>
    </ligand>
</feature>
<feature type="binding site" evidence="1">
    <location>
        <position position="147"/>
    </location>
    <ligand>
        <name>Mg(2+)</name>
        <dbReference type="ChEBI" id="CHEBI:18420"/>
    </ligand>
</feature>
<feature type="binding site" evidence="1">
    <location>
        <position position="169"/>
    </location>
    <ligand>
        <name>Mg(2+)</name>
        <dbReference type="ChEBI" id="CHEBI:18420"/>
    </ligand>
</feature>
<organismHost>
    <name type="scientific">Ornithodoros</name>
    <name type="common">relapsing fever ticks</name>
    <dbReference type="NCBI Taxonomy" id="6937"/>
</organismHost>
<organismHost>
    <name type="scientific">Phacochoerus aethiopicus</name>
    <name type="common">Warthog</name>
    <dbReference type="NCBI Taxonomy" id="85517"/>
</organismHost>
<organismHost>
    <name type="scientific">Phacochoerus africanus</name>
    <name type="common">Warthog</name>
    <dbReference type="NCBI Taxonomy" id="41426"/>
</organismHost>
<organismHost>
    <name type="scientific">Potamochoerus larvatus</name>
    <name type="common">Bushpig</name>
    <dbReference type="NCBI Taxonomy" id="273792"/>
</organismHost>
<organismHost>
    <name type="scientific">Sus scrofa</name>
    <name type="common">Pig</name>
    <dbReference type="NCBI Taxonomy" id="9823"/>
</organismHost>
<sequence>MQLKTSIGLITCRMNTQNNQIETILVQKRYSLAFSEFIHCHYSINANQGHLIKMFNNMTINERLLVKTLDFDRMWYHIWIETPVYELYHKKYQKFRKNWLLPDNGKKLISLINQAKGSGTLLWEIPKGKPKEDESDLTCAIREFEEETGITREYYQILPEFKKSMSYFDGKTEYKHIYFLAMLCKSLEEPNMNLSLQYENRIAEISKISWQNMEAVRFISKRQSLNLEPIIGPAFNFIKNYLRYKH</sequence>
<proteinExistence type="inferred from homology"/>
<dbReference type="EC" id="3.1.3.-" evidence="2"/>
<dbReference type="EC" id="3.6.1.52" evidence="2"/>
<dbReference type="EMBL" id="AY261366">
    <property type="status" value="NOT_ANNOTATED_CDS"/>
    <property type="molecule type" value="Genomic_DNA"/>
</dbReference>
<dbReference type="SMR" id="P0C997"/>
<dbReference type="Proteomes" id="UP000000858">
    <property type="component" value="Segment"/>
</dbReference>
<dbReference type="GO" id="GO:0044168">
    <property type="term" value="C:host cell rough endoplasmic reticulum"/>
    <property type="evidence" value="ECO:0007669"/>
    <property type="project" value="UniProtKB-SubCell"/>
</dbReference>
<dbReference type="GO" id="GO:0004081">
    <property type="term" value="F:bis(5'-nucleosyl)-tetraphosphatase (asymmetrical) activity"/>
    <property type="evidence" value="ECO:0007669"/>
    <property type="project" value="TreeGrafter"/>
</dbReference>
<dbReference type="GO" id="GO:0008486">
    <property type="term" value="F:diphosphoinositol-polyphosphate diphosphatase activity"/>
    <property type="evidence" value="ECO:0007669"/>
    <property type="project" value="UniProtKB-EC"/>
</dbReference>
<dbReference type="GO" id="GO:0046872">
    <property type="term" value="F:metal ion binding"/>
    <property type="evidence" value="ECO:0007669"/>
    <property type="project" value="UniProtKB-KW"/>
</dbReference>
<dbReference type="GO" id="GO:0003723">
    <property type="term" value="F:RNA binding"/>
    <property type="evidence" value="ECO:0007669"/>
    <property type="project" value="UniProtKB-KW"/>
</dbReference>
<dbReference type="GO" id="GO:0006167">
    <property type="term" value="P:AMP biosynthetic process"/>
    <property type="evidence" value="ECO:0007669"/>
    <property type="project" value="TreeGrafter"/>
</dbReference>
<dbReference type="GO" id="GO:0006754">
    <property type="term" value="P:ATP biosynthetic process"/>
    <property type="evidence" value="ECO:0007669"/>
    <property type="project" value="TreeGrafter"/>
</dbReference>
<dbReference type="GO" id="GO:0039657">
    <property type="term" value="P:symbiont-mediated suppression of host gene expression"/>
    <property type="evidence" value="ECO:0007669"/>
    <property type="project" value="UniProtKB-KW"/>
</dbReference>
<dbReference type="Gene3D" id="3.90.79.10">
    <property type="entry name" value="Nucleoside Triphosphate Pyrophosphohydrolase"/>
    <property type="match status" value="1"/>
</dbReference>
<dbReference type="InterPro" id="IPR015797">
    <property type="entry name" value="NUDIX_hydrolase-like_dom_sf"/>
</dbReference>
<dbReference type="InterPro" id="IPR020084">
    <property type="entry name" value="NUDIX_hydrolase_CS"/>
</dbReference>
<dbReference type="InterPro" id="IPR000086">
    <property type="entry name" value="NUDIX_hydrolase_dom"/>
</dbReference>
<dbReference type="InterPro" id="IPR051325">
    <property type="entry name" value="Nudix_hydrolase_domain"/>
</dbReference>
<dbReference type="PANTHER" id="PTHR21340:SF0">
    <property type="entry name" value="BIS(5'-NUCLEOSYL)-TETRAPHOSPHATASE [ASYMMETRICAL]"/>
    <property type="match status" value="1"/>
</dbReference>
<dbReference type="PANTHER" id="PTHR21340">
    <property type="entry name" value="DIADENOSINE 5,5-P1,P4-TETRAPHOSPHATE PYROPHOSPHOHYDROLASE MUTT"/>
    <property type="match status" value="1"/>
</dbReference>
<dbReference type="Pfam" id="PF00293">
    <property type="entry name" value="NUDIX"/>
    <property type="match status" value="1"/>
</dbReference>
<dbReference type="SUPFAM" id="SSF55811">
    <property type="entry name" value="Nudix"/>
    <property type="match status" value="1"/>
</dbReference>
<dbReference type="PROSITE" id="PS51462">
    <property type="entry name" value="NUDIX"/>
    <property type="match status" value="1"/>
</dbReference>
<dbReference type="PROSITE" id="PS00893">
    <property type="entry name" value="NUDIX_BOX"/>
    <property type="match status" value="1"/>
</dbReference>
<accession>P0C997</accession>
<comment type="function">
    <text evidence="2">Decapping enzyme required for the removal of the 5'-end m7GpppN cap tethered to viral and host mRNAs to allow their decay in cells. May therefore accelerate viral and cellular mRNA turnover to eliminate competing host mRNAs and allow stage-specific synthesis of viral proteins. Acceleration of the turnover of cellular transcripts may even promote the shutoff of host protein synthesis. In addition to the mRNA cap, g5R also efficiently hydrolyzes diphosphoinositol polyphosphates. Down-regulation of the level of PP-InsP5 (diphosphoinositol pentakisphosphate) may play a role in viral manipulation of the cellular secretory pathway, a step necessary for the formation of virions. Binds viral and cellular poly(A) mRNAs, thereby decreasing both types of mRNAs.</text>
</comment>
<comment type="catalytic activity">
    <reaction evidence="2">
        <text>diphospho-myo-inositol polyphosphate + H2O = myo-inositol polyphosphate + phosphate.</text>
        <dbReference type="EC" id="3.6.1.52"/>
    </reaction>
</comment>
<comment type="cofactor">
    <cofactor evidence="2">
        <name>Mg(2+)</name>
        <dbReference type="ChEBI" id="CHEBI:18420"/>
    </cofactor>
    <cofactor evidence="2">
        <name>Mn(2+)</name>
        <dbReference type="ChEBI" id="CHEBI:29035"/>
    </cofactor>
</comment>
<comment type="subunit">
    <text evidence="2">Interacts with host RPL23A.</text>
</comment>
<comment type="subcellular location">
    <subcellularLocation>
        <location evidence="2">Host rough endoplasmic reticulum</location>
    </subcellularLocation>
    <text evidence="2">Accumulates at the periphery of the viral factories.</text>
</comment>
<comment type="induction">
    <text evidence="4">Expressed early and up to late in the infection cycle.</text>
</comment>
<comment type="similarity">
    <text evidence="4">Belongs to the Nudix hydrolase family. DIPP subfamily.</text>
</comment>
<reference key="1">
    <citation type="submission" date="2003-03" db="EMBL/GenBank/DDBJ databases">
        <title>African swine fever virus genomes.</title>
        <authorList>
            <person name="Kutish G.F."/>
            <person name="Rock D.L."/>
        </authorList>
    </citation>
    <scope>NUCLEOTIDE SEQUENCE [LARGE SCALE GENOMIC DNA]</scope>
</reference>
<evidence type="ECO:0000250" key="1"/>
<evidence type="ECO:0000250" key="2">
    <source>
        <dbReference type="UniProtKB" id="P32092"/>
    </source>
</evidence>
<evidence type="ECO:0000255" key="3">
    <source>
        <dbReference type="PROSITE-ProRule" id="PRU00794"/>
    </source>
</evidence>
<evidence type="ECO:0000305" key="4"/>
<name>DIPP_ASFWA</name>